<sequence>MAKEIKFSDSARNLLFEGVRQLHDAVKVTMGPRGRNVLIQKSYGAPSITKDGVSVAKEIELSCPVANMGAQLVKEVASKTADAAGDGTTTATVLAYSIFKEGLRNITAGANPIEVKRGMDKAAEAIINELKKASKKVGGKEEITQVATISANSDHNIGKLIADAMEKVGKDGVITVEEAKGIEDELDVVEGMQFDRGYLSPYFVTNAEKMTAQLDNAYILLTDKKISSMKDILPLLEKTMKEGKPLLIIAEDIEGEALTTLVVNKLRGVLNIAAVKAPGFGDRRKEMLKDIAILTGGQVISEELGLSLENAEVEFLGKAGRIVIDKDNTTIVDGKGHSDDVKDRVAQIKTQIASTTSDYDKEKLQERLAKLSGGVAVIKVGAASEVEMKEKKDRVDDALSATKAAVEEGIVIGGGAALIRAAQKVHLNLHDDEKVGYEIIMRAIKAPLAQIAINAGYDGGVVVNEVQKHEGHFGFNASNGKYVDMFKEGIIDPLKVERIALQNAVSVSSLLLTTEATVHEIKEEKAAPAMPDMGGMGGMGGMGGMM</sequence>
<name>CH60_HELPJ</name>
<evidence type="ECO:0000255" key="1">
    <source>
        <dbReference type="HAMAP-Rule" id="MF_00600"/>
    </source>
</evidence>
<feature type="chain" id="PRO_0000063390" description="Chaperonin GroEL">
    <location>
        <begin position="1"/>
        <end position="546"/>
    </location>
</feature>
<feature type="binding site" evidence="1">
    <location>
        <begin position="29"/>
        <end position="32"/>
    </location>
    <ligand>
        <name>ATP</name>
        <dbReference type="ChEBI" id="CHEBI:30616"/>
    </ligand>
</feature>
<feature type="binding site" evidence="1">
    <location>
        <position position="50"/>
    </location>
    <ligand>
        <name>ATP</name>
        <dbReference type="ChEBI" id="CHEBI:30616"/>
    </ligand>
</feature>
<feature type="binding site" evidence="1">
    <location>
        <begin position="86"/>
        <end position="90"/>
    </location>
    <ligand>
        <name>ATP</name>
        <dbReference type="ChEBI" id="CHEBI:30616"/>
    </ligand>
</feature>
<feature type="binding site" evidence="1">
    <location>
        <position position="414"/>
    </location>
    <ligand>
        <name>ATP</name>
        <dbReference type="ChEBI" id="CHEBI:30616"/>
    </ligand>
</feature>
<feature type="binding site" evidence="1">
    <location>
        <position position="492"/>
    </location>
    <ligand>
        <name>ATP</name>
        <dbReference type="ChEBI" id="CHEBI:30616"/>
    </ligand>
</feature>
<proteinExistence type="inferred from homology"/>
<keyword id="KW-0067">ATP-binding</keyword>
<keyword id="KW-0143">Chaperone</keyword>
<keyword id="KW-0963">Cytoplasm</keyword>
<keyword id="KW-0413">Isomerase</keyword>
<keyword id="KW-0547">Nucleotide-binding</keyword>
<keyword id="KW-0346">Stress response</keyword>
<reference key="1">
    <citation type="journal article" date="1999" name="Nature">
        <title>Genomic sequence comparison of two unrelated isolates of the human gastric pathogen Helicobacter pylori.</title>
        <authorList>
            <person name="Alm R.A."/>
            <person name="Ling L.-S.L."/>
            <person name="Moir D.T."/>
            <person name="King B.L."/>
            <person name="Brown E.D."/>
            <person name="Doig P.C."/>
            <person name="Smith D.R."/>
            <person name="Noonan B."/>
            <person name="Guild B.C."/>
            <person name="deJonge B.L."/>
            <person name="Carmel G."/>
            <person name="Tummino P.J."/>
            <person name="Caruso A."/>
            <person name="Uria-Nickelsen M."/>
            <person name="Mills D.M."/>
            <person name="Ives C."/>
            <person name="Gibson R."/>
            <person name="Merberg D."/>
            <person name="Mills S.D."/>
            <person name="Jiang Q."/>
            <person name="Taylor D.E."/>
            <person name="Vovis G.F."/>
            <person name="Trust T.J."/>
        </authorList>
    </citation>
    <scope>NUCLEOTIDE SEQUENCE [LARGE SCALE GENOMIC DNA]</scope>
    <source>
        <strain>J99 / ATCC 700824</strain>
    </source>
</reference>
<protein>
    <recommendedName>
        <fullName evidence="1">Chaperonin GroEL</fullName>
        <ecNumber evidence="1">5.6.1.7</ecNumber>
    </recommendedName>
    <alternativeName>
        <fullName evidence="1">60 kDa chaperonin</fullName>
    </alternativeName>
    <alternativeName>
        <fullName evidence="1">Chaperonin-60</fullName>
        <shortName evidence="1">Cpn60</shortName>
    </alternativeName>
</protein>
<comment type="function">
    <text evidence="1">Together with its co-chaperonin GroES, plays an essential role in assisting protein folding. The GroEL-GroES system forms a nano-cage that allows encapsulation of the non-native substrate proteins and provides a physical environment optimized to promote and accelerate protein folding.</text>
</comment>
<comment type="catalytic activity">
    <reaction evidence="1">
        <text>ATP + H2O + a folded polypeptide = ADP + phosphate + an unfolded polypeptide.</text>
        <dbReference type="EC" id="5.6.1.7"/>
    </reaction>
</comment>
<comment type="subunit">
    <text evidence="1">Forms a cylinder of 14 subunits composed of two heptameric rings stacked back-to-back. Interacts with the co-chaperonin GroES.</text>
</comment>
<comment type="subcellular location">
    <subcellularLocation>
        <location evidence="1">Cytoplasm</location>
    </subcellularLocation>
</comment>
<comment type="similarity">
    <text evidence="1">Belongs to the chaperonin (HSP60) family.</text>
</comment>
<gene>
    <name evidence="1" type="primary">groEL</name>
    <name evidence="1" type="synonym">groL</name>
    <name type="synonym">hsp60</name>
    <name type="synonym">hspB</name>
    <name type="synonym">mopA</name>
    <name type="ordered locus">jhp_0008</name>
</gene>
<dbReference type="EC" id="5.6.1.7" evidence="1"/>
<dbReference type="EMBL" id="AE001439">
    <property type="protein sequence ID" value="AAD05583.1"/>
    <property type="molecule type" value="Genomic_DNA"/>
</dbReference>
<dbReference type="PIR" id="B71986">
    <property type="entry name" value="B71986"/>
</dbReference>
<dbReference type="RefSeq" id="WP_001040281.1">
    <property type="nucleotide sequence ID" value="NZ_CP011330.1"/>
</dbReference>
<dbReference type="SMR" id="Q9ZN50"/>
<dbReference type="IntAct" id="Q9ZN50">
    <property type="interactions" value="10"/>
</dbReference>
<dbReference type="KEGG" id="hpj:jhp_0008"/>
<dbReference type="PATRIC" id="fig|85963.30.peg.1035"/>
<dbReference type="eggNOG" id="COG0459">
    <property type="taxonomic scope" value="Bacteria"/>
</dbReference>
<dbReference type="Proteomes" id="UP000000804">
    <property type="component" value="Chromosome"/>
</dbReference>
<dbReference type="GO" id="GO:0005737">
    <property type="term" value="C:cytoplasm"/>
    <property type="evidence" value="ECO:0007669"/>
    <property type="project" value="UniProtKB-SubCell"/>
</dbReference>
<dbReference type="GO" id="GO:0005524">
    <property type="term" value="F:ATP binding"/>
    <property type="evidence" value="ECO:0007669"/>
    <property type="project" value="UniProtKB-UniRule"/>
</dbReference>
<dbReference type="GO" id="GO:0140662">
    <property type="term" value="F:ATP-dependent protein folding chaperone"/>
    <property type="evidence" value="ECO:0007669"/>
    <property type="project" value="InterPro"/>
</dbReference>
<dbReference type="GO" id="GO:0016853">
    <property type="term" value="F:isomerase activity"/>
    <property type="evidence" value="ECO:0007669"/>
    <property type="project" value="UniProtKB-KW"/>
</dbReference>
<dbReference type="GO" id="GO:0051082">
    <property type="term" value="F:unfolded protein binding"/>
    <property type="evidence" value="ECO:0007669"/>
    <property type="project" value="UniProtKB-UniRule"/>
</dbReference>
<dbReference type="GO" id="GO:0042026">
    <property type="term" value="P:protein refolding"/>
    <property type="evidence" value="ECO:0007669"/>
    <property type="project" value="UniProtKB-UniRule"/>
</dbReference>
<dbReference type="CDD" id="cd03344">
    <property type="entry name" value="GroEL"/>
    <property type="match status" value="1"/>
</dbReference>
<dbReference type="FunFam" id="3.50.7.10:FF:000001">
    <property type="entry name" value="60 kDa chaperonin"/>
    <property type="match status" value="1"/>
</dbReference>
<dbReference type="Gene3D" id="3.50.7.10">
    <property type="entry name" value="GroEL"/>
    <property type="match status" value="1"/>
</dbReference>
<dbReference type="Gene3D" id="1.10.560.10">
    <property type="entry name" value="GroEL-like equatorial domain"/>
    <property type="match status" value="1"/>
</dbReference>
<dbReference type="Gene3D" id="3.30.260.10">
    <property type="entry name" value="TCP-1-like chaperonin intermediate domain"/>
    <property type="match status" value="1"/>
</dbReference>
<dbReference type="HAMAP" id="MF_00600">
    <property type="entry name" value="CH60"/>
    <property type="match status" value="1"/>
</dbReference>
<dbReference type="InterPro" id="IPR018370">
    <property type="entry name" value="Chaperonin_Cpn60_CS"/>
</dbReference>
<dbReference type="InterPro" id="IPR001844">
    <property type="entry name" value="Cpn60/GroEL"/>
</dbReference>
<dbReference type="InterPro" id="IPR002423">
    <property type="entry name" value="Cpn60/GroEL/TCP-1"/>
</dbReference>
<dbReference type="InterPro" id="IPR027409">
    <property type="entry name" value="GroEL-like_apical_dom_sf"/>
</dbReference>
<dbReference type="InterPro" id="IPR027413">
    <property type="entry name" value="GROEL-like_equatorial_sf"/>
</dbReference>
<dbReference type="InterPro" id="IPR027410">
    <property type="entry name" value="TCP-1-like_intermed_sf"/>
</dbReference>
<dbReference type="NCBIfam" id="TIGR02348">
    <property type="entry name" value="GroEL"/>
    <property type="match status" value="1"/>
</dbReference>
<dbReference type="NCBIfam" id="NF000592">
    <property type="entry name" value="PRK00013.1"/>
    <property type="match status" value="1"/>
</dbReference>
<dbReference type="NCBIfam" id="NF009487">
    <property type="entry name" value="PRK12849.1"/>
    <property type="match status" value="1"/>
</dbReference>
<dbReference type="NCBIfam" id="NF009488">
    <property type="entry name" value="PRK12850.1"/>
    <property type="match status" value="1"/>
</dbReference>
<dbReference type="NCBIfam" id="NF009489">
    <property type="entry name" value="PRK12851.1"/>
    <property type="match status" value="1"/>
</dbReference>
<dbReference type="PANTHER" id="PTHR45633">
    <property type="entry name" value="60 KDA HEAT SHOCK PROTEIN, MITOCHONDRIAL"/>
    <property type="match status" value="1"/>
</dbReference>
<dbReference type="Pfam" id="PF00118">
    <property type="entry name" value="Cpn60_TCP1"/>
    <property type="match status" value="1"/>
</dbReference>
<dbReference type="PRINTS" id="PR00298">
    <property type="entry name" value="CHAPERONIN60"/>
</dbReference>
<dbReference type="SUPFAM" id="SSF52029">
    <property type="entry name" value="GroEL apical domain-like"/>
    <property type="match status" value="1"/>
</dbReference>
<dbReference type="SUPFAM" id="SSF48592">
    <property type="entry name" value="GroEL equatorial domain-like"/>
    <property type="match status" value="2"/>
</dbReference>
<dbReference type="PROSITE" id="PS00296">
    <property type="entry name" value="CHAPERONINS_CPN60"/>
    <property type="match status" value="1"/>
</dbReference>
<accession>Q9ZN50</accession>
<organism>
    <name type="scientific">Helicobacter pylori (strain J99 / ATCC 700824)</name>
    <name type="common">Campylobacter pylori J99</name>
    <dbReference type="NCBI Taxonomy" id="85963"/>
    <lineage>
        <taxon>Bacteria</taxon>
        <taxon>Pseudomonadati</taxon>
        <taxon>Campylobacterota</taxon>
        <taxon>Epsilonproteobacteria</taxon>
        <taxon>Campylobacterales</taxon>
        <taxon>Helicobacteraceae</taxon>
        <taxon>Helicobacter</taxon>
    </lineage>
</organism>